<organism>
    <name type="scientific">Zygosaccharomyces rouxii (strain ATCC 2623 / CBS 732 / NBRC 1130 / NCYC 568 / NRRL Y-229)</name>
    <dbReference type="NCBI Taxonomy" id="559307"/>
    <lineage>
        <taxon>Eukaryota</taxon>
        <taxon>Fungi</taxon>
        <taxon>Dikarya</taxon>
        <taxon>Ascomycota</taxon>
        <taxon>Saccharomycotina</taxon>
        <taxon>Saccharomycetes</taxon>
        <taxon>Saccharomycetales</taxon>
        <taxon>Saccharomycetaceae</taxon>
        <taxon>Zygosaccharomyces</taxon>
    </lineage>
</organism>
<keyword id="KW-0028">Amino-acid biosynthesis</keyword>
<keyword id="KW-0963">Cytoplasm</keyword>
<keyword id="KW-0413">Isomerase</keyword>
<keyword id="KW-0486">Methionine biosynthesis</keyword>
<keyword id="KW-0539">Nucleus</keyword>
<keyword id="KW-1185">Reference proteome</keyword>
<accession>C5DU12</accession>
<proteinExistence type="inferred from homology"/>
<reference key="1">
    <citation type="journal article" date="2009" name="Genome Res.">
        <title>Comparative genomics of protoploid Saccharomycetaceae.</title>
        <authorList>
            <consortium name="The Genolevures Consortium"/>
            <person name="Souciet J.-L."/>
            <person name="Dujon B."/>
            <person name="Gaillardin C."/>
            <person name="Johnston M."/>
            <person name="Baret P.V."/>
            <person name="Cliften P."/>
            <person name="Sherman D.J."/>
            <person name="Weissenbach J."/>
            <person name="Westhof E."/>
            <person name="Wincker P."/>
            <person name="Jubin C."/>
            <person name="Poulain J."/>
            <person name="Barbe V."/>
            <person name="Segurens B."/>
            <person name="Artiguenave F."/>
            <person name="Anthouard V."/>
            <person name="Vacherie B."/>
            <person name="Val M.-E."/>
            <person name="Fulton R.S."/>
            <person name="Minx P."/>
            <person name="Wilson R."/>
            <person name="Durrens P."/>
            <person name="Jean G."/>
            <person name="Marck C."/>
            <person name="Martin T."/>
            <person name="Nikolski M."/>
            <person name="Rolland T."/>
            <person name="Seret M.-L."/>
            <person name="Casaregola S."/>
            <person name="Despons L."/>
            <person name="Fairhead C."/>
            <person name="Fischer G."/>
            <person name="Lafontaine I."/>
            <person name="Leh V."/>
            <person name="Lemaire M."/>
            <person name="de Montigny J."/>
            <person name="Neuveglise C."/>
            <person name="Thierry A."/>
            <person name="Blanc-Lenfle I."/>
            <person name="Bleykasten C."/>
            <person name="Diffels J."/>
            <person name="Fritsch E."/>
            <person name="Frangeul L."/>
            <person name="Goeffon A."/>
            <person name="Jauniaux N."/>
            <person name="Kachouri-Lafond R."/>
            <person name="Payen C."/>
            <person name="Potier S."/>
            <person name="Pribylova L."/>
            <person name="Ozanne C."/>
            <person name="Richard G.-F."/>
            <person name="Sacerdot C."/>
            <person name="Straub M.-L."/>
            <person name="Talla E."/>
        </authorList>
    </citation>
    <scope>NUCLEOTIDE SEQUENCE [LARGE SCALE GENOMIC DNA]</scope>
    <source>
        <strain>ATCC 2623 / CBS 732 / BCRC 21506 / NBRC 1130 / NCYC 568 / NRRL Y-229</strain>
    </source>
</reference>
<feature type="chain" id="PRO_0000402060" description="Methylthioribose-1-phosphate isomerase">
    <location>
        <begin position="1"/>
        <end position="414"/>
    </location>
</feature>
<feature type="region of interest" description="Disordered" evidence="2">
    <location>
        <begin position="205"/>
        <end position="224"/>
    </location>
</feature>
<feature type="compositionally biased region" description="Polar residues" evidence="2">
    <location>
        <begin position="205"/>
        <end position="215"/>
    </location>
</feature>
<feature type="active site" description="Proton donor" evidence="1">
    <location>
        <position position="283"/>
    </location>
</feature>
<feature type="site" description="Transition state stabilizer" evidence="1">
    <location>
        <position position="181"/>
    </location>
</feature>
<sequence>MSLEAIKFDRSEPRKVSVKVLDQLLLPYTTKYIPVHTIDDGYRVIKNMQVRGAPAIAIVGSLSILTEVQFLQLDSQKSTQWFYDLSDWSNVNSKLLQRIEFLLSSRPTAVNLSNSLTEIRGILQNSSDLSDFDSKLFQYVCTLIDDDLANNITMGNNGAEYLLESLVQDGFQGEFGVLTICNTGSLATSGYGTALGVIRSLWAKSQSQGSENPPSKKQKKDAAPTKMVQVFPLETRPYNQGSRLTAYELVHDEIPATLITDSMVSYKIKTSPIPIKAAFVGADRIVRNGDTANKIGTFQLAIVCKQFGIKFFVVAPKTTIDNVTPSGDQIVVEERKPSEFRLVTGTAVDYVNESPILNDSQEPQSAKVGIAPPNVNVWNPAFDITPHEFIDGIVTEKGVFTKDDKGNFQLDKLF</sequence>
<comment type="function">
    <text evidence="1">Catalyzes the interconversion of methylthioribose-1-phosphate (MTR-1-P) into methylthioribulose-1-phosphate (MTRu-1-P).</text>
</comment>
<comment type="catalytic activity">
    <reaction evidence="1">
        <text>5-(methylsulfanyl)-alpha-D-ribose 1-phosphate = 5-(methylsulfanyl)-D-ribulose 1-phosphate</text>
        <dbReference type="Rhea" id="RHEA:19989"/>
        <dbReference type="ChEBI" id="CHEBI:58533"/>
        <dbReference type="ChEBI" id="CHEBI:58548"/>
        <dbReference type="EC" id="5.3.1.23"/>
    </reaction>
</comment>
<comment type="pathway">
    <text evidence="1">Amino-acid biosynthesis; L-methionine biosynthesis via salvage pathway; L-methionine from S-methyl-5-thio-alpha-D-ribose 1-phosphate: step 1/6.</text>
</comment>
<comment type="subcellular location">
    <subcellularLocation>
        <location evidence="1">Cytoplasm</location>
    </subcellularLocation>
    <subcellularLocation>
        <location evidence="1">Nucleus</location>
    </subcellularLocation>
</comment>
<comment type="similarity">
    <text evidence="1">Belongs to the eIF-2B alpha/beta/delta subunits family. MtnA subfamily.</text>
</comment>
<protein>
    <recommendedName>
        <fullName evidence="1">Methylthioribose-1-phosphate isomerase</fullName>
        <shortName evidence="1">M1Pi</shortName>
        <shortName evidence="1">MTR-1-P isomerase</shortName>
        <ecNumber evidence="1">5.3.1.23</ecNumber>
    </recommendedName>
    <alternativeName>
        <fullName evidence="1">S-methyl-5-thioribose-1-phosphate isomerase</fullName>
    </alternativeName>
    <alternativeName>
        <fullName evidence="1">Translation initiation factor eIF-2B subunit alpha/beta/delta-like protein</fullName>
    </alternativeName>
</protein>
<gene>
    <name evidence="1" type="primary">MRI1</name>
    <name type="ordered locus">ZYRO0C12936g</name>
</gene>
<evidence type="ECO:0000255" key="1">
    <source>
        <dbReference type="HAMAP-Rule" id="MF_03119"/>
    </source>
</evidence>
<evidence type="ECO:0000256" key="2">
    <source>
        <dbReference type="SAM" id="MobiDB-lite"/>
    </source>
</evidence>
<dbReference type="EC" id="5.3.1.23" evidence="1"/>
<dbReference type="EMBL" id="CU928175">
    <property type="protein sequence ID" value="CAR27273.1"/>
    <property type="molecule type" value="Genomic_DNA"/>
</dbReference>
<dbReference type="RefSeq" id="XP_002496206.1">
    <property type="nucleotide sequence ID" value="XM_002496161.1"/>
</dbReference>
<dbReference type="SMR" id="C5DU12"/>
<dbReference type="FunCoup" id="C5DU12">
    <property type="interactions" value="763"/>
</dbReference>
<dbReference type="STRING" id="559307.C5DU12"/>
<dbReference type="GeneID" id="8203426"/>
<dbReference type="KEGG" id="zro:ZYRO0C12936g"/>
<dbReference type="HOGENOM" id="CLU_016218_1_3_1"/>
<dbReference type="InParanoid" id="C5DU12"/>
<dbReference type="UniPathway" id="UPA00904">
    <property type="reaction ID" value="UER00874"/>
</dbReference>
<dbReference type="Proteomes" id="UP000008536">
    <property type="component" value="Chromosome C"/>
</dbReference>
<dbReference type="GO" id="GO:0005737">
    <property type="term" value="C:cytoplasm"/>
    <property type="evidence" value="ECO:0007669"/>
    <property type="project" value="UniProtKB-SubCell"/>
</dbReference>
<dbReference type="GO" id="GO:0005634">
    <property type="term" value="C:nucleus"/>
    <property type="evidence" value="ECO:0007669"/>
    <property type="project" value="UniProtKB-SubCell"/>
</dbReference>
<dbReference type="GO" id="GO:0046523">
    <property type="term" value="F:S-methyl-5-thioribose-1-phosphate isomerase activity"/>
    <property type="evidence" value="ECO:0007669"/>
    <property type="project" value="UniProtKB-UniRule"/>
</dbReference>
<dbReference type="GO" id="GO:0019509">
    <property type="term" value="P:L-methionine salvage from methylthioadenosine"/>
    <property type="evidence" value="ECO:0007669"/>
    <property type="project" value="UniProtKB-UniRule"/>
</dbReference>
<dbReference type="FunFam" id="1.20.120.420:FF:000006">
    <property type="entry name" value="Methylthioribose-1-phosphate isomerase"/>
    <property type="match status" value="1"/>
</dbReference>
<dbReference type="Gene3D" id="1.20.120.420">
    <property type="entry name" value="translation initiation factor eif-2b, domain 1"/>
    <property type="match status" value="1"/>
</dbReference>
<dbReference type="Gene3D" id="3.40.50.10470">
    <property type="entry name" value="Translation initiation factor eif-2b, domain 2"/>
    <property type="match status" value="1"/>
</dbReference>
<dbReference type="HAMAP" id="MF_01678">
    <property type="entry name" value="Salvage_MtnA"/>
    <property type="match status" value="1"/>
</dbReference>
<dbReference type="InterPro" id="IPR000649">
    <property type="entry name" value="IF-2B-related"/>
</dbReference>
<dbReference type="InterPro" id="IPR005251">
    <property type="entry name" value="IF-M1Pi"/>
</dbReference>
<dbReference type="InterPro" id="IPR042529">
    <property type="entry name" value="IF_2B-like_C"/>
</dbReference>
<dbReference type="InterPro" id="IPR011559">
    <property type="entry name" value="Initiation_fac_2B_a/b/d"/>
</dbReference>
<dbReference type="InterPro" id="IPR027363">
    <property type="entry name" value="M1Pi_N"/>
</dbReference>
<dbReference type="InterPro" id="IPR037171">
    <property type="entry name" value="NagB/RpiA_transferase-like"/>
</dbReference>
<dbReference type="NCBIfam" id="TIGR00524">
    <property type="entry name" value="eIF-2B_rel"/>
    <property type="match status" value="1"/>
</dbReference>
<dbReference type="PANTHER" id="PTHR43475">
    <property type="entry name" value="METHYLTHIORIBOSE-1-PHOSPHATE ISOMERASE"/>
    <property type="match status" value="1"/>
</dbReference>
<dbReference type="PANTHER" id="PTHR43475:SF1">
    <property type="entry name" value="METHYLTHIORIBOSE-1-PHOSPHATE ISOMERASE"/>
    <property type="match status" value="1"/>
</dbReference>
<dbReference type="Pfam" id="PF01008">
    <property type="entry name" value="IF-2B"/>
    <property type="match status" value="1"/>
</dbReference>
<dbReference type="SUPFAM" id="SSF100950">
    <property type="entry name" value="NagB/RpiA/CoA transferase-like"/>
    <property type="match status" value="1"/>
</dbReference>
<name>MTNA_ZYGRC</name>